<gene>
    <name evidence="1" type="primary">mqo</name>
    <name type="ordered locus">MMAR_1881</name>
</gene>
<accession>B2HJU4</accession>
<evidence type="ECO:0000255" key="1">
    <source>
        <dbReference type="HAMAP-Rule" id="MF_00212"/>
    </source>
</evidence>
<name>MQO_MYCMM</name>
<protein>
    <recommendedName>
        <fullName evidence="1">Probable malate:quinone oxidoreductase</fullName>
        <ecNumber evidence="1">1.1.5.4</ecNumber>
    </recommendedName>
    <alternativeName>
        <fullName evidence="1">MQO</fullName>
    </alternativeName>
    <alternativeName>
        <fullName evidence="1">Malate dehydrogenase [quinone]</fullName>
    </alternativeName>
</protein>
<proteinExistence type="inferred from homology"/>
<sequence length="493" mass="53718">MSESARTDVVLVGAGIMSATLGAMLRRLEPDWSITLIERLDAVAAESSGPWNNAGTGHSALCELNYTPQRPDGSIDISKAVRINEEFQVTRQFWAYAAENGILNDVRSFLNPLPHVSFVHGAERVHQLRRRRDALAGNPLFAGAEWIDDPDEFARRLPLMAAKRVFSEPIALNWAADGTDVDFGALSRQLIGYCVRNGAVALFGQEVRNLVRQPDGGWMLTVVNRRTGEKRKLKTKFVFVGAGGNALSLLQRSGIKEINGFAGFPIGGRFLRTANPALTAAHRAKVYGVPAPGAPPLGALHLDLRYVNGKSWLMFGPFAGWSPKFLKRGHLRDLPGSIKPNNILSMVGVGVTQVTLLNYLIGQLRLSEPDRVAVLRKFVPSAADSDWELIVAGQRVQVIRRDKRKGGVLEFGTTVVGEADGSIAGLLGGSPGASTAVPIMLEVLQRCFTHRYQSWLPALKEMVPSLGANLSEEPVLYDEVRSWSSRALQLDAS</sequence>
<dbReference type="EC" id="1.1.5.4" evidence="1"/>
<dbReference type="EMBL" id="CP000854">
    <property type="protein sequence ID" value="ACC40330.1"/>
    <property type="molecule type" value="Genomic_DNA"/>
</dbReference>
<dbReference type="RefSeq" id="WP_012393678.1">
    <property type="nucleotide sequence ID" value="NC_010612.1"/>
</dbReference>
<dbReference type="SMR" id="B2HJU4"/>
<dbReference type="STRING" id="216594.MMAR_1881"/>
<dbReference type="KEGG" id="mmi:MMAR_1881"/>
<dbReference type="eggNOG" id="COG0579">
    <property type="taxonomic scope" value="Bacteria"/>
</dbReference>
<dbReference type="HOGENOM" id="CLU_028151_0_0_11"/>
<dbReference type="OrthoDB" id="9763983at2"/>
<dbReference type="UniPathway" id="UPA00223">
    <property type="reaction ID" value="UER01008"/>
</dbReference>
<dbReference type="Proteomes" id="UP000001190">
    <property type="component" value="Chromosome"/>
</dbReference>
<dbReference type="GO" id="GO:0047545">
    <property type="term" value="F:2-hydroxyglutarate dehydrogenase activity"/>
    <property type="evidence" value="ECO:0007669"/>
    <property type="project" value="TreeGrafter"/>
</dbReference>
<dbReference type="GO" id="GO:0008924">
    <property type="term" value="F:L-malate dehydrogenase (quinone) activity"/>
    <property type="evidence" value="ECO:0007669"/>
    <property type="project" value="UniProtKB-UniRule"/>
</dbReference>
<dbReference type="GO" id="GO:0006099">
    <property type="term" value="P:tricarboxylic acid cycle"/>
    <property type="evidence" value="ECO:0007669"/>
    <property type="project" value="UniProtKB-UniRule"/>
</dbReference>
<dbReference type="Gene3D" id="3.30.9.10">
    <property type="entry name" value="D-Amino Acid Oxidase, subunit A, domain 2"/>
    <property type="match status" value="1"/>
</dbReference>
<dbReference type="Gene3D" id="3.50.50.60">
    <property type="entry name" value="FAD/NAD(P)-binding domain"/>
    <property type="match status" value="1"/>
</dbReference>
<dbReference type="HAMAP" id="MF_00212">
    <property type="entry name" value="MQO"/>
    <property type="match status" value="1"/>
</dbReference>
<dbReference type="InterPro" id="IPR036188">
    <property type="entry name" value="FAD/NAD-bd_sf"/>
</dbReference>
<dbReference type="InterPro" id="IPR006231">
    <property type="entry name" value="MQO"/>
</dbReference>
<dbReference type="NCBIfam" id="TIGR01320">
    <property type="entry name" value="mal_quin_oxido"/>
    <property type="match status" value="1"/>
</dbReference>
<dbReference type="NCBIfam" id="NF003606">
    <property type="entry name" value="PRK05257.2-1"/>
    <property type="match status" value="1"/>
</dbReference>
<dbReference type="NCBIfam" id="NF003611">
    <property type="entry name" value="PRK05257.3-2"/>
    <property type="match status" value="1"/>
</dbReference>
<dbReference type="PANTHER" id="PTHR43104">
    <property type="entry name" value="L-2-HYDROXYGLUTARATE DEHYDROGENASE, MITOCHONDRIAL"/>
    <property type="match status" value="1"/>
</dbReference>
<dbReference type="PANTHER" id="PTHR43104:SF2">
    <property type="entry name" value="L-2-HYDROXYGLUTARATE DEHYDROGENASE, MITOCHONDRIAL"/>
    <property type="match status" value="1"/>
</dbReference>
<dbReference type="Pfam" id="PF06039">
    <property type="entry name" value="Mqo"/>
    <property type="match status" value="1"/>
</dbReference>
<dbReference type="SUPFAM" id="SSF51905">
    <property type="entry name" value="FAD/NAD(P)-binding domain"/>
    <property type="match status" value="1"/>
</dbReference>
<reference key="1">
    <citation type="journal article" date="2008" name="Genome Res.">
        <title>Insights from the complete genome sequence of Mycobacterium marinum on the evolution of Mycobacterium tuberculosis.</title>
        <authorList>
            <person name="Stinear T.P."/>
            <person name="Seemann T."/>
            <person name="Harrison P.F."/>
            <person name="Jenkin G.A."/>
            <person name="Davies J.K."/>
            <person name="Johnson P.D."/>
            <person name="Abdellah Z."/>
            <person name="Arrowsmith C."/>
            <person name="Chillingworth T."/>
            <person name="Churcher C."/>
            <person name="Clarke K."/>
            <person name="Cronin A."/>
            <person name="Davis P."/>
            <person name="Goodhead I."/>
            <person name="Holroyd N."/>
            <person name="Jagels K."/>
            <person name="Lord A."/>
            <person name="Moule S."/>
            <person name="Mungall K."/>
            <person name="Norbertczak H."/>
            <person name="Quail M.A."/>
            <person name="Rabbinowitsch E."/>
            <person name="Walker D."/>
            <person name="White B."/>
            <person name="Whitehead S."/>
            <person name="Small P.L."/>
            <person name="Brosch R."/>
            <person name="Ramakrishnan L."/>
            <person name="Fischbach M.A."/>
            <person name="Parkhill J."/>
            <person name="Cole S.T."/>
        </authorList>
    </citation>
    <scope>NUCLEOTIDE SEQUENCE [LARGE SCALE GENOMIC DNA]</scope>
    <source>
        <strain>ATCC BAA-535 / M</strain>
    </source>
</reference>
<comment type="catalytic activity">
    <reaction evidence="1">
        <text>(S)-malate + a quinone = a quinol + oxaloacetate</text>
        <dbReference type="Rhea" id="RHEA:46012"/>
        <dbReference type="ChEBI" id="CHEBI:15589"/>
        <dbReference type="ChEBI" id="CHEBI:16452"/>
        <dbReference type="ChEBI" id="CHEBI:24646"/>
        <dbReference type="ChEBI" id="CHEBI:132124"/>
        <dbReference type="EC" id="1.1.5.4"/>
    </reaction>
</comment>
<comment type="cofactor">
    <cofactor evidence="1">
        <name>FAD</name>
        <dbReference type="ChEBI" id="CHEBI:57692"/>
    </cofactor>
</comment>
<comment type="pathway">
    <text evidence="1">Carbohydrate metabolism; tricarboxylic acid cycle; oxaloacetate from (S)-malate (quinone route): step 1/1.</text>
</comment>
<comment type="similarity">
    <text evidence="1">Belongs to the MQO family.</text>
</comment>
<organism>
    <name type="scientific">Mycobacterium marinum (strain ATCC BAA-535 / M)</name>
    <dbReference type="NCBI Taxonomy" id="216594"/>
    <lineage>
        <taxon>Bacteria</taxon>
        <taxon>Bacillati</taxon>
        <taxon>Actinomycetota</taxon>
        <taxon>Actinomycetes</taxon>
        <taxon>Mycobacteriales</taxon>
        <taxon>Mycobacteriaceae</taxon>
        <taxon>Mycobacterium</taxon>
        <taxon>Mycobacterium ulcerans group</taxon>
    </lineage>
</organism>
<keyword id="KW-0274">FAD</keyword>
<keyword id="KW-0285">Flavoprotein</keyword>
<keyword id="KW-0560">Oxidoreductase</keyword>
<keyword id="KW-1185">Reference proteome</keyword>
<keyword id="KW-0816">Tricarboxylic acid cycle</keyword>
<feature type="chain" id="PRO_1000099876" description="Probable malate:quinone oxidoreductase">
    <location>
        <begin position="1"/>
        <end position="493"/>
    </location>
</feature>